<feature type="chain" id="PRO_1000045273" description="Probable transcriptional regulatory protein RBAM_007230">
    <location>
        <begin position="1"/>
        <end position="239"/>
    </location>
</feature>
<protein>
    <recommendedName>
        <fullName evidence="1">Probable transcriptional regulatory protein RBAM_007230</fullName>
    </recommendedName>
</protein>
<accession>A7Z282</accession>
<reference key="1">
    <citation type="journal article" date="2007" name="Nat. Biotechnol.">
        <title>Comparative analysis of the complete genome sequence of the plant growth-promoting bacterium Bacillus amyloliquefaciens FZB42.</title>
        <authorList>
            <person name="Chen X.H."/>
            <person name="Koumoutsi A."/>
            <person name="Scholz R."/>
            <person name="Eisenreich A."/>
            <person name="Schneider K."/>
            <person name="Heinemeyer I."/>
            <person name="Morgenstern B."/>
            <person name="Voss B."/>
            <person name="Hess W.R."/>
            <person name="Reva O."/>
            <person name="Junge H."/>
            <person name="Voigt B."/>
            <person name="Jungblut P.R."/>
            <person name="Vater J."/>
            <person name="Suessmuth R."/>
            <person name="Liesegang H."/>
            <person name="Strittmatter A."/>
            <person name="Gottschalk G."/>
            <person name="Borriss R."/>
        </authorList>
    </citation>
    <scope>NUCLEOTIDE SEQUENCE [LARGE SCALE GENOMIC DNA]</scope>
    <source>
        <strain>DSM 23117 / BGSC 10A6 / LMG 26770 / FZB42</strain>
    </source>
</reference>
<organism>
    <name type="scientific">Bacillus velezensis (strain DSM 23117 / BGSC 10A6 / LMG 26770 / FZB42)</name>
    <name type="common">Bacillus amyloliquefaciens subsp. plantarum</name>
    <dbReference type="NCBI Taxonomy" id="326423"/>
    <lineage>
        <taxon>Bacteria</taxon>
        <taxon>Bacillati</taxon>
        <taxon>Bacillota</taxon>
        <taxon>Bacilli</taxon>
        <taxon>Bacillales</taxon>
        <taxon>Bacillaceae</taxon>
        <taxon>Bacillus</taxon>
        <taxon>Bacillus amyloliquefaciens group</taxon>
    </lineage>
</organism>
<comment type="subcellular location">
    <subcellularLocation>
        <location evidence="1">Cytoplasm</location>
    </subcellularLocation>
</comment>
<comment type="similarity">
    <text evidence="1">Belongs to the TACO1 family. YeeN subfamily.</text>
</comment>
<keyword id="KW-0963">Cytoplasm</keyword>
<keyword id="KW-0238">DNA-binding</keyword>
<keyword id="KW-0804">Transcription</keyword>
<keyword id="KW-0805">Transcription regulation</keyword>
<gene>
    <name type="ordered locus">RBAM_007230</name>
</gene>
<sequence>MGRKWNNIKEKKASKDANTSRIYAKFGREIYVAAKQGEPDPESNQALKVVLERAKTYSVPKNIIERAIEKAKGGAEENFDELRYEGFGPNGSMIIVDALTNNVNRTAPEVRAAFGKNGGNMGVSGSVAYMFDATAVIGVEGKTADEALELLMEADVDVRDILEEDDSVIVYAEPDQFHAVQEAFKNAGVEEFTVAELTMLAQNEVELPEDAKAQFEKLIDVLEDLEDVQQVYHNVDLGE</sequence>
<name>Y723_BACVZ</name>
<dbReference type="EMBL" id="CP000560">
    <property type="protein sequence ID" value="ABS73108.1"/>
    <property type="molecule type" value="Genomic_DNA"/>
</dbReference>
<dbReference type="RefSeq" id="WP_003155709.1">
    <property type="nucleotide sequence ID" value="NC_009725.2"/>
</dbReference>
<dbReference type="SMR" id="A7Z282"/>
<dbReference type="GeneID" id="93079858"/>
<dbReference type="KEGG" id="bay:RBAM_007230"/>
<dbReference type="HOGENOM" id="CLU_062974_2_0_9"/>
<dbReference type="Proteomes" id="UP000001120">
    <property type="component" value="Chromosome"/>
</dbReference>
<dbReference type="GO" id="GO:0005829">
    <property type="term" value="C:cytosol"/>
    <property type="evidence" value="ECO:0007669"/>
    <property type="project" value="TreeGrafter"/>
</dbReference>
<dbReference type="GO" id="GO:0003677">
    <property type="term" value="F:DNA binding"/>
    <property type="evidence" value="ECO:0007669"/>
    <property type="project" value="UniProtKB-UniRule"/>
</dbReference>
<dbReference type="GO" id="GO:0006355">
    <property type="term" value="P:regulation of DNA-templated transcription"/>
    <property type="evidence" value="ECO:0007669"/>
    <property type="project" value="UniProtKB-UniRule"/>
</dbReference>
<dbReference type="FunFam" id="1.10.10.200:FF:000003">
    <property type="entry name" value="Probable transcriptional regulatory protein YeeN"/>
    <property type="match status" value="1"/>
</dbReference>
<dbReference type="FunFam" id="3.30.70.980:FF:000004">
    <property type="entry name" value="Probable transcriptional regulatory protein YeeN"/>
    <property type="match status" value="1"/>
</dbReference>
<dbReference type="Gene3D" id="1.10.10.200">
    <property type="match status" value="1"/>
</dbReference>
<dbReference type="Gene3D" id="3.30.70.980">
    <property type="match status" value="2"/>
</dbReference>
<dbReference type="HAMAP" id="MF_00693">
    <property type="entry name" value="Transcrip_reg_TACO1"/>
    <property type="match status" value="1"/>
</dbReference>
<dbReference type="HAMAP" id="MF_00918">
    <property type="entry name" value="Transcrip_reg_TACO1_YeeN"/>
    <property type="match status" value="1"/>
</dbReference>
<dbReference type="InterPro" id="IPR017856">
    <property type="entry name" value="Integrase-like_N"/>
</dbReference>
<dbReference type="InterPro" id="IPR048300">
    <property type="entry name" value="TACO1_YebC-like_2nd/3rd_dom"/>
</dbReference>
<dbReference type="InterPro" id="IPR049083">
    <property type="entry name" value="TACO1_YebC_N"/>
</dbReference>
<dbReference type="InterPro" id="IPR002876">
    <property type="entry name" value="Transcrip_reg_TACO1-like"/>
</dbReference>
<dbReference type="InterPro" id="IPR026564">
    <property type="entry name" value="Transcrip_reg_TACO1-like_dom3"/>
</dbReference>
<dbReference type="InterPro" id="IPR026562">
    <property type="entry name" value="Transcrip_reg_TACO1_YeeN"/>
</dbReference>
<dbReference type="InterPro" id="IPR029072">
    <property type="entry name" value="YebC-like"/>
</dbReference>
<dbReference type="NCBIfam" id="NF001030">
    <property type="entry name" value="PRK00110.1"/>
    <property type="match status" value="1"/>
</dbReference>
<dbReference type="NCBIfam" id="NF009044">
    <property type="entry name" value="PRK12378.1"/>
    <property type="match status" value="1"/>
</dbReference>
<dbReference type="NCBIfam" id="TIGR01033">
    <property type="entry name" value="YebC/PmpR family DNA-binding transcriptional regulator"/>
    <property type="match status" value="1"/>
</dbReference>
<dbReference type="PANTHER" id="PTHR12532">
    <property type="entry name" value="TRANSLATIONAL ACTIVATOR OF CYTOCHROME C OXIDASE 1"/>
    <property type="match status" value="1"/>
</dbReference>
<dbReference type="PANTHER" id="PTHR12532:SF0">
    <property type="entry name" value="TRANSLATIONAL ACTIVATOR OF CYTOCHROME C OXIDASE 1"/>
    <property type="match status" value="1"/>
</dbReference>
<dbReference type="Pfam" id="PF20772">
    <property type="entry name" value="TACO1_YebC_N"/>
    <property type="match status" value="1"/>
</dbReference>
<dbReference type="Pfam" id="PF01709">
    <property type="entry name" value="Transcrip_reg"/>
    <property type="match status" value="1"/>
</dbReference>
<dbReference type="SUPFAM" id="SSF75625">
    <property type="entry name" value="YebC-like"/>
    <property type="match status" value="1"/>
</dbReference>
<evidence type="ECO:0000255" key="1">
    <source>
        <dbReference type="HAMAP-Rule" id="MF_00918"/>
    </source>
</evidence>
<proteinExistence type="inferred from homology"/>